<feature type="transit peptide" description="Chloroplast" evidence="2">
    <location>
        <begin position="1"/>
        <end position="56"/>
    </location>
</feature>
<feature type="chain" id="PRO_0000399282" description="Adenylosuccinate synthetase 2, chloroplastic">
    <location>
        <begin position="57"/>
        <end position="514"/>
    </location>
</feature>
<feature type="active site" description="Proton acceptor" evidence="2">
    <location>
        <position position="101"/>
    </location>
</feature>
<feature type="active site" description="Proton donor" evidence="2">
    <location>
        <position position="129"/>
    </location>
</feature>
<feature type="binding site" evidence="2">
    <location>
        <begin position="100"/>
        <end position="106"/>
    </location>
    <ligand>
        <name>GTP</name>
        <dbReference type="ChEBI" id="CHEBI:37565"/>
    </ligand>
</feature>
<feature type="binding site" description="in other chain" evidence="2">
    <location>
        <begin position="101"/>
        <end position="104"/>
    </location>
    <ligand>
        <name>IMP</name>
        <dbReference type="ChEBI" id="CHEBI:58053"/>
        <note>ligand shared between dimeric partners</note>
    </ligand>
</feature>
<feature type="binding site" evidence="2">
    <location>
        <position position="101"/>
    </location>
    <ligand>
        <name>Mg(2+)</name>
        <dbReference type="ChEBI" id="CHEBI:18420"/>
    </ligand>
</feature>
<feature type="binding site" description="in other chain" evidence="2">
    <location>
        <begin position="126"/>
        <end position="129"/>
    </location>
    <ligand>
        <name>IMP</name>
        <dbReference type="ChEBI" id="CHEBI:58053"/>
        <note>ligand shared between dimeric partners</note>
    </ligand>
</feature>
<feature type="binding site" evidence="2">
    <location>
        <begin position="128"/>
        <end position="130"/>
    </location>
    <ligand>
        <name>GTP</name>
        <dbReference type="ChEBI" id="CHEBI:37565"/>
    </ligand>
</feature>
<feature type="binding site" evidence="2">
    <location>
        <position position="128"/>
    </location>
    <ligand>
        <name>Mg(2+)</name>
        <dbReference type="ChEBI" id="CHEBI:18420"/>
    </ligand>
</feature>
<feature type="binding site" description="in other chain" evidence="2">
    <location>
        <position position="218"/>
    </location>
    <ligand>
        <name>IMP</name>
        <dbReference type="ChEBI" id="CHEBI:58053"/>
        <note>ligand shared between dimeric partners</note>
    </ligand>
</feature>
<feature type="binding site" evidence="2">
    <location>
        <position position="232"/>
    </location>
    <ligand>
        <name>IMP</name>
        <dbReference type="ChEBI" id="CHEBI:58053"/>
        <note>ligand shared between dimeric partners</note>
    </ligand>
</feature>
<feature type="binding site" description="in other chain" evidence="2">
    <location>
        <position position="312"/>
    </location>
    <ligand>
        <name>IMP</name>
        <dbReference type="ChEBI" id="CHEBI:58053"/>
        <note>ligand shared between dimeric partners</note>
    </ligand>
</feature>
<feature type="binding site" description="in other chain" evidence="2">
    <location>
        <position position="327"/>
    </location>
    <ligand>
        <name>IMP</name>
        <dbReference type="ChEBI" id="CHEBI:58053"/>
        <note>ligand shared between dimeric partners</note>
    </ligand>
</feature>
<feature type="binding site" evidence="2">
    <location>
        <begin position="387"/>
        <end position="393"/>
    </location>
    <ligand>
        <name>substrate</name>
    </ligand>
</feature>
<feature type="binding site" description="in other chain" evidence="2">
    <location>
        <position position="391"/>
    </location>
    <ligand>
        <name>IMP</name>
        <dbReference type="ChEBI" id="CHEBI:58053"/>
        <note>ligand shared between dimeric partners</note>
    </ligand>
</feature>
<feature type="binding site" evidence="2">
    <location>
        <position position="393"/>
    </location>
    <ligand>
        <name>GTP</name>
        <dbReference type="ChEBI" id="CHEBI:37565"/>
    </ligand>
</feature>
<feature type="binding site" evidence="2">
    <location>
        <begin position="419"/>
        <end position="421"/>
    </location>
    <ligand>
        <name>GTP</name>
        <dbReference type="ChEBI" id="CHEBI:37565"/>
    </ligand>
</feature>
<feature type="binding site" evidence="2">
    <location>
        <begin position="502"/>
        <end position="504"/>
    </location>
    <ligand>
        <name>GTP</name>
        <dbReference type="ChEBI" id="CHEBI:37565"/>
    </ligand>
</feature>
<dbReference type="EC" id="6.3.4.4" evidence="2"/>
<dbReference type="EMBL" id="DS545127">
    <property type="protein sequence ID" value="EDQ56772.1"/>
    <property type="molecule type" value="Genomic_DNA"/>
</dbReference>
<dbReference type="RefSeq" id="XP_001778414.1">
    <property type="nucleotide sequence ID" value="XM_001778362.1"/>
</dbReference>
<dbReference type="SMR" id="A9TIK2"/>
<dbReference type="FunCoup" id="A9TIK2">
    <property type="interactions" value="3659"/>
</dbReference>
<dbReference type="PaxDb" id="3218-PP1S238_77V6.1"/>
<dbReference type="EnsemblPlants" id="Pp3c9_24250V3.1">
    <property type="protein sequence ID" value="Pp3c9_24250V3.1"/>
    <property type="gene ID" value="Pp3c9_24250"/>
</dbReference>
<dbReference type="EnsemblPlants" id="Pp3c9_24250V3.2">
    <property type="protein sequence ID" value="Pp3c9_24250V3.2"/>
    <property type="gene ID" value="Pp3c9_24250"/>
</dbReference>
<dbReference type="Gramene" id="Pp3c9_24250V3.1">
    <property type="protein sequence ID" value="Pp3c9_24250V3.1"/>
    <property type="gene ID" value="Pp3c9_24250"/>
</dbReference>
<dbReference type="Gramene" id="Pp3c9_24250V3.2">
    <property type="protein sequence ID" value="Pp3c9_24250V3.2"/>
    <property type="gene ID" value="Pp3c9_24250"/>
</dbReference>
<dbReference type="eggNOG" id="KOG1355">
    <property type="taxonomic scope" value="Eukaryota"/>
</dbReference>
<dbReference type="HOGENOM" id="CLU_029848_0_0_1"/>
<dbReference type="InParanoid" id="A9TIK2"/>
<dbReference type="OMA" id="FHHAKPI"/>
<dbReference type="OrthoDB" id="10265645at2759"/>
<dbReference type="UniPathway" id="UPA00075">
    <property type="reaction ID" value="UER00335"/>
</dbReference>
<dbReference type="Proteomes" id="UP000006727">
    <property type="component" value="Chromosome 9"/>
</dbReference>
<dbReference type="GO" id="GO:0009507">
    <property type="term" value="C:chloroplast"/>
    <property type="evidence" value="ECO:0007669"/>
    <property type="project" value="UniProtKB-SubCell"/>
</dbReference>
<dbReference type="GO" id="GO:0005737">
    <property type="term" value="C:cytoplasm"/>
    <property type="evidence" value="ECO:0000318"/>
    <property type="project" value="GO_Central"/>
</dbReference>
<dbReference type="GO" id="GO:0004019">
    <property type="term" value="F:adenylosuccinate synthase activity"/>
    <property type="evidence" value="ECO:0000318"/>
    <property type="project" value="GO_Central"/>
</dbReference>
<dbReference type="GO" id="GO:0005525">
    <property type="term" value="F:GTP binding"/>
    <property type="evidence" value="ECO:0007669"/>
    <property type="project" value="UniProtKB-UniRule"/>
</dbReference>
<dbReference type="GO" id="GO:0000287">
    <property type="term" value="F:magnesium ion binding"/>
    <property type="evidence" value="ECO:0007669"/>
    <property type="project" value="UniProtKB-UniRule"/>
</dbReference>
<dbReference type="GO" id="GO:0044208">
    <property type="term" value="P:'de novo' AMP biosynthetic process"/>
    <property type="evidence" value="ECO:0000318"/>
    <property type="project" value="GO_Central"/>
</dbReference>
<dbReference type="GO" id="GO:0046040">
    <property type="term" value="P:IMP metabolic process"/>
    <property type="evidence" value="ECO:0000318"/>
    <property type="project" value="GO_Central"/>
</dbReference>
<dbReference type="CDD" id="cd03108">
    <property type="entry name" value="AdSS"/>
    <property type="match status" value="1"/>
</dbReference>
<dbReference type="FunFam" id="3.90.170.10:FF:000001">
    <property type="entry name" value="Adenylosuccinate synthetase"/>
    <property type="match status" value="1"/>
</dbReference>
<dbReference type="FunFam" id="1.10.300.10:FF:000002">
    <property type="entry name" value="Adenylosuccinate synthetase, chloroplastic"/>
    <property type="match status" value="1"/>
</dbReference>
<dbReference type="Gene3D" id="3.40.440.10">
    <property type="entry name" value="Adenylosuccinate Synthetase, subunit A, domain 1"/>
    <property type="match status" value="1"/>
</dbReference>
<dbReference type="Gene3D" id="1.10.300.10">
    <property type="entry name" value="Adenylosuccinate Synthetase, subunit A, domain 2"/>
    <property type="match status" value="1"/>
</dbReference>
<dbReference type="Gene3D" id="3.90.170.10">
    <property type="entry name" value="Adenylosuccinate Synthetase, subunit A, domain 3"/>
    <property type="match status" value="1"/>
</dbReference>
<dbReference type="HAMAP" id="MF_00011">
    <property type="entry name" value="Adenylosucc_synth"/>
    <property type="match status" value="1"/>
</dbReference>
<dbReference type="InterPro" id="IPR018220">
    <property type="entry name" value="Adenylosuccin_syn_GTP-bd"/>
</dbReference>
<dbReference type="InterPro" id="IPR033128">
    <property type="entry name" value="Adenylosuccin_syn_Lys_AS"/>
</dbReference>
<dbReference type="InterPro" id="IPR042109">
    <property type="entry name" value="Adenylosuccinate_synth_dom1"/>
</dbReference>
<dbReference type="InterPro" id="IPR042110">
    <property type="entry name" value="Adenylosuccinate_synth_dom2"/>
</dbReference>
<dbReference type="InterPro" id="IPR042111">
    <property type="entry name" value="Adenylosuccinate_synth_dom3"/>
</dbReference>
<dbReference type="InterPro" id="IPR001114">
    <property type="entry name" value="Adenylosuccinate_synthetase"/>
</dbReference>
<dbReference type="InterPro" id="IPR027417">
    <property type="entry name" value="P-loop_NTPase"/>
</dbReference>
<dbReference type="NCBIfam" id="NF002223">
    <property type="entry name" value="PRK01117.1"/>
    <property type="match status" value="1"/>
</dbReference>
<dbReference type="NCBIfam" id="TIGR00184">
    <property type="entry name" value="purA"/>
    <property type="match status" value="1"/>
</dbReference>
<dbReference type="PANTHER" id="PTHR11846">
    <property type="entry name" value="ADENYLOSUCCINATE SYNTHETASE"/>
    <property type="match status" value="1"/>
</dbReference>
<dbReference type="PANTHER" id="PTHR11846:SF0">
    <property type="entry name" value="ADENYLOSUCCINATE SYNTHETASE"/>
    <property type="match status" value="1"/>
</dbReference>
<dbReference type="Pfam" id="PF00709">
    <property type="entry name" value="Adenylsucc_synt"/>
    <property type="match status" value="1"/>
</dbReference>
<dbReference type="SMART" id="SM00788">
    <property type="entry name" value="Adenylsucc_synt"/>
    <property type="match status" value="1"/>
</dbReference>
<dbReference type="SUPFAM" id="SSF52540">
    <property type="entry name" value="P-loop containing nucleoside triphosphate hydrolases"/>
    <property type="match status" value="1"/>
</dbReference>
<dbReference type="PROSITE" id="PS01266">
    <property type="entry name" value="ADENYLOSUCCIN_SYN_1"/>
    <property type="match status" value="1"/>
</dbReference>
<dbReference type="PROSITE" id="PS00513">
    <property type="entry name" value="ADENYLOSUCCIN_SYN_2"/>
    <property type="match status" value="1"/>
</dbReference>
<name>PURA2_PHYPA</name>
<protein>
    <recommendedName>
        <fullName evidence="2">Adenylosuccinate synthetase 2, chloroplastic</fullName>
        <shortName evidence="2">AMPSase 2</shortName>
        <shortName evidence="2">AdSS 2</shortName>
        <ecNumber evidence="2">6.3.4.4</ecNumber>
    </recommendedName>
    <alternativeName>
        <fullName evidence="2">IMP--aspartate ligase 2</fullName>
    </alternativeName>
</protein>
<reference key="1">
    <citation type="journal article" date="2008" name="Science">
        <title>The Physcomitrella genome reveals evolutionary insights into the conquest of land by plants.</title>
        <authorList>
            <person name="Rensing S.A."/>
            <person name="Lang D."/>
            <person name="Zimmer A.D."/>
            <person name="Terry A."/>
            <person name="Salamov A."/>
            <person name="Shapiro H."/>
            <person name="Nishiyama T."/>
            <person name="Perroud P.-F."/>
            <person name="Lindquist E.A."/>
            <person name="Kamisugi Y."/>
            <person name="Tanahashi T."/>
            <person name="Sakakibara K."/>
            <person name="Fujita T."/>
            <person name="Oishi K."/>
            <person name="Shin-I T."/>
            <person name="Kuroki Y."/>
            <person name="Toyoda A."/>
            <person name="Suzuki Y."/>
            <person name="Hashimoto S.-I."/>
            <person name="Yamaguchi K."/>
            <person name="Sugano S."/>
            <person name="Kohara Y."/>
            <person name="Fujiyama A."/>
            <person name="Anterola A."/>
            <person name="Aoki S."/>
            <person name="Ashton N."/>
            <person name="Barbazuk W.B."/>
            <person name="Barker E."/>
            <person name="Bennetzen J.L."/>
            <person name="Blankenship R."/>
            <person name="Cho S.H."/>
            <person name="Dutcher S.K."/>
            <person name="Estelle M."/>
            <person name="Fawcett J.A."/>
            <person name="Gundlach H."/>
            <person name="Hanada K."/>
            <person name="Heyl A."/>
            <person name="Hicks K.A."/>
            <person name="Hughes J."/>
            <person name="Lohr M."/>
            <person name="Mayer K."/>
            <person name="Melkozernov A."/>
            <person name="Murata T."/>
            <person name="Nelson D.R."/>
            <person name="Pils B."/>
            <person name="Prigge M."/>
            <person name="Reiss B."/>
            <person name="Renner T."/>
            <person name="Rombauts S."/>
            <person name="Rushton P.J."/>
            <person name="Sanderfoot A."/>
            <person name="Schween G."/>
            <person name="Shiu S.-H."/>
            <person name="Stueber K."/>
            <person name="Theodoulou F.L."/>
            <person name="Tu H."/>
            <person name="Van de Peer Y."/>
            <person name="Verrier P.J."/>
            <person name="Waters E."/>
            <person name="Wood A."/>
            <person name="Yang L."/>
            <person name="Cove D."/>
            <person name="Cuming A.C."/>
            <person name="Hasebe M."/>
            <person name="Lucas S."/>
            <person name="Mishler B.D."/>
            <person name="Reski R."/>
            <person name="Grigoriev I.V."/>
            <person name="Quatrano R.S."/>
            <person name="Boore J.L."/>
        </authorList>
    </citation>
    <scope>NUCLEOTIDE SEQUENCE [LARGE SCALE GENOMIC DNA]</scope>
    <source>
        <strain>cv. Gransden 2004</strain>
    </source>
</reference>
<sequence>MAMAAAAAVASQGLLATSSQQQKKSSAKLICNAATFFSGKRLLWVKSCNNGAVGLRASGVRCEAQAIEREAVKADAGNSREEDAFSGLKQVCAVLGTQWGDEGKGKLVDILAQRFDVVARCQGGANAGHTIYNDKGEKFALHLVPSGILNEKTTCVVGNGVVIHLPGFFKEIDNLESKGVNTNGRLLVSDRAHLLFNLHQEVDGLREAELAGQMIGTTKRGIGPCYASKAIRNGIRVSDLRHLDTFREKLDILYRDAAARFKDFEYSSDEVNAEMEKYVKYAERLEPYIVDTVDYVNAAIAEGKRILIEGGQATMLDIDFGTYPFVTSSNPSVGGICTGLGVAPNRLGDIVGVAKAYTSRVGSGPYPTELFGEEGDELRKAGFEWGTTTGRPRRCGWLDIVALNFVCTINGFTAINLTKLDVLSGLPEVKLGIAYKTPSGEKLRAFPADLSILEQVEVEYEILEGWKEDITKVRSYDELPAAAQRYVERIEELIGLPCQYIGVGPGRDALIVKQ</sequence>
<accession>A9TIK2</accession>
<comment type="function">
    <text evidence="1">Plays an important role in the de novo pathway and in the salvage pathway of purine nucleotide biosynthesis. Catalyzes the first committed step in the biosynthesis of AMP from IMP (By similarity).</text>
</comment>
<comment type="catalytic activity">
    <reaction evidence="2">
        <text>IMP + L-aspartate + GTP = N(6)-(1,2-dicarboxyethyl)-AMP + GDP + phosphate + 2 H(+)</text>
        <dbReference type="Rhea" id="RHEA:15753"/>
        <dbReference type="ChEBI" id="CHEBI:15378"/>
        <dbReference type="ChEBI" id="CHEBI:29991"/>
        <dbReference type="ChEBI" id="CHEBI:37565"/>
        <dbReference type="ChEBI" id="CHEBI:43474"/>
        <dbReference type="ChEBI" id="CHEBI:57567"/>
        <dbReference type="ChEBI" id="CHEBI:58053"/>
        <dbReference type="ChEBI" id="CHEBI:58189"/>
        <dbReference type="EC" id="6.3.4.4"/>
    </reaction>
</comment>
<comment type="cofactor">
    <cofactor evidence="2">
        <name>Mg(2+)</name>
        <dbReference type="ChEBI" id="CHEBI:18420"/>
    </cofactor>
    <text evidence="2">Binds 1 Mg(2+) ion per subunit.</text>
</comment>
<comment type="pathway">
    <text evidence="2">Purine metabolism; AMP biosynthesis via de novo pathway; AMP from IMP: step 1/2.</text>
</comment>
<comment type="subunit">
    <text evidence="2">Homodimer.</text>
</comment>
<comment type="subcellular location">
    <subcellularLocation>
        <location evidence="2">Plastid</location>
        <location evidence="2">Chloroplast</location>
    </subcellularLocation>
</comment>
<comment type="similarity">
    <text evidence="2">Belongs to the adenylosuccinate synthetase family.</text>
</comment>
<proteinExistence type="inferred from homology"/>
<gene>
    <name evidence="2" type="primary">PURA2</name>
    <name type="ORF">PHYPADRAFT_222623</name>
</gene>
<organism>
    <name type="scientific">Physcomitrium patens</name>
    <name type="common">Spreading-leaved earth moss</name>
    <name type="synonym">Physcomitrella patens</name>
    <dbReference type="NCBI Taxonomy" id="3218"/>
    <lineage>
        <taxon>Eukaryota</taxon>
        <taxon>Viridiplantae</taxon>
        <taxon>Streptophyta</taxon>
        <taxon>Embryophyta</taxon>
        <taxon>Bryophyta</taxon>
        <taxon>Bryophytina</taxon>
        <taxon>Bryopsida</taxon>
        <taxon>Funariidae</taxon>
        <taxon>Funariales</taxon>
        <taxon>Funariaceae</taxon>
        <taxon>Physcomitrium</taxon>
    </lineage>
</organism>
<evidence type="ECO:0000250" key="1"/>
<evidence type="ECO:0000255" key="2">
    <source>
        <dbReference type="HAMAP-Rule" id="MF_03125"/>
    </source>
</evidence>
<keyword id="KW-0150">Chloroplast</keyword>
<keyword id="KW-0342">GTP-binding</keyword>
<keyword id="KW-0436">Ligase</keyword>
<keyword id="KW-0460">Magnesium</keyword>
<keyword id="KW-0479">Metal-binding</keyword>
<keyword id="KW-0547">Nucleotide-binding</keyword>
<keyword id="KW-0934">Plastid</keyword>
<keyword id="KW-0658">Purine biosynthesis</keyword>
<keyword id="KW-1185">Reference proteome</keyword>
<keyword id="KW-0809">Transit peptide</keyword>